<proteinExistence type="inferred from homology"/>
<sequence length="112" mass="12733">MIVGRHIIAELYGVKEELIAKEEVVRSIVEEVVDKAELTKVGSVYKQFNPHGVTGIVLIAESHVSIHTWPEYGLVNLDIFTCGDTSKVEKAFKLFLEKFKPESYRHYVLDRG</sequence>
<comment type="function">
    <text evidence="1">Catalyzes the decarboxylation of S-adenosylmethionine to S-adenosylmethioninamine (dcAdoMet), the propylamine donor required for the synthesis of the polyamines spermine and spermidine from the diamine putrescine.</text>
</comment>
<comment type="catalytic activity">
    <reaction evidence="1">
        <text>S-adenosyl-L-methionine + H(+) = S-adenosyl 3-(methylsulfanyl)propylamine + CO2</text>
        <dbReference type="Rhea" id="RHEA:15981"/>
        <dbReference type="ChEBI" id="CHEBI:15378"/>
        <dbReference type="ChEBI" id="CHEBI:16526"/>
        <dbReference type="ChEBI" id="CHEBI:57443"/>
        <dbReference type="ChEBI" id="CHEBI:59789"/>
        <dbReference type="EC" id="4.1.1.50"/>
    </reaction>
</comment>
<comment type="cofactor">
    <cofactor evidence="1">
        <name>pyruvate</name>
        <dbReference type="ChEBI" id="CHEBI:15361"/>
    </cofactor>
    <text evidence="1">Binds 1 pyruvoyl group covalently per subunit.</text>
</comment>
<comment type="pathway">
    <text evidence="1">Amine and polyamine biosynthesis; S-adenosylmethioninamine biosynthesis; S-adenosylmethioninamine from S-adenosyl-L-methionine: step 1/1.</text>
</comment>
<comment type="subunit">
    <text evidence="1">Heterotetramer of two alpha and two beta chains arranged as a dimer of alpha/beta heterodimers.</text>
</comment>
<comment type="PTM">
    <text evidence="1">Is synthesized initially as an inactive proenzyme. Formation of the active enzyme involves a self-maturation process in which the active site pyruvoyl group is generated from an internal serine residue via an autocatalytic post-translational modification. Two non-identical subunits are generated from the proenzyme in this reaction, and the pyruvate is formed at the N-terminus of the alpha chain, which is derived from the carboxyl end of the proenzyme. The post-translation cleavage follows an unusual pathway, termed non-hydrolytic serinolysis, in which the side chain hydroxyl group of the serine supplies its oxygen atom to form the C-terminus of the beta chain, while the remainder of the serine residue undergoes an oxidative deamination to produce ammonia and the pyruvoyl group blocking the N-terminus of the alpha chain.</text>
</comment>
<comment type="similarity">
    <text evidence="1">Belongs to the prokaryotic AdoMetDC family. Type 1 subfamily.</text>
</comment>
<keyword id="KW-0068">Autocatalytic cleavage</keyword>
<keyword id="KW-0210">Decarboxylase</keyword>
<keyword id="KW-0456">Lyase</keyword>
<keyword id="KW-0620">Polyamine biosynthesis</keyword>
<keyword id="KW-0670">Pyruvate</keyword>
<keyword id="KW-1185">Reference proteome</keyword>
<keyword id="KW-0949">S-adenosyl-L-methionine</keyword>
<keyword id="KW-0704">Schiff base</keyword>
<keyword id="KW-0745">Spermidine biosynthesis</keyword>
<keyword id="KW-0865">Zymogen</keyword>
<name>SPEH_ARCFU</name>
<evidence type="ECO:0000255" key="1">
    <source>
        <dbReference type="HAMAP-Rule" id="MF_00464"/>
    </source>
</evidence>
<accession>O28663</accession>
<reference key="1">
    <citation type="journal article" date="1997" name="Nature">
        <title>The complete genome sequence of the hyperthermophilic, sulphate-reducing archaeon Archaeoglobus fulgidus.</title>
        <authorList>
            <person name="Klenk H.-P."/>
            <person name="Clayton R.A."/>
            <person name="Tomb J.-F."/>
            <person name="White O."/>
            <person name="Nelson K.E."/>
            <person name="Ketchum K.A."/>
            <person name="Dodson R.J."/>
            <person name="Gwinn M.L."/>
            <person name="Hickey E.K."/>
            <person name="Peterson J.D."/>
            <person name="Richardson D.L."/>
            <person name="Kerlavage A.R."/>
            <person name="Graham D.E."/>
            <person name="Kyrpides N.C."/>
            <person name="Fleischmann R.D."/>
            <person name="Quackenbush J."/>
            <person name="Lee N.H."/>
            <person name="Sutton G.G."/>
            <person name="Gill S.R."/>
            <person name="Kirkness E.F."/>
            <person name="Dougherty B.A."/>
            <person name="McKenney K."/>
            <person name="Adams M.D."/>
            <person name="Loftus B.J."/>
            <person name="Peterson S.N."/>
            <person name="Reich C.I."/>
            <person name="McNeil L.K."/>
            <person name="Badger J.H."/>
            <person name="Glodek A."/>
            <person name="Zhou L."/>
            <person name="Overbeek R."/>
            <person name="Gocayne J.D."/>
            <person name="Weidman J.F."/>
            <person name="McDonald L.A."/>
            <person name="Utterback T.R."/>
            <person name="Cotton M.D."/>
            <person name="Spriggs T."/>
            <person name="Artiach P."/>
            <person name="Kaine B.P."/>
            <person name="Sykes S.M."/>
            <person name="Sadow P.W."/>
            <person name="D'Andrea K.P."/>
            <person name="Bowman C."/>
            <person name="Fujii C."/>
            <person name="Garland S.A."/>
            <person name="Mason T.M."/>
            <person name="Olsen G.J."/>
            <person name="Fraser C.M."/>
            <person name="Smith H.O."/>
            <person name="Woese C.R."/>
            <person name="Venter J.C."/>
        </authorList>
    </citation>
    <scope>NUCLEOTIDE SEQUENCE [LARGE SCALE GENOMIC DNA]</scope>
    <source>
        <strain>ATCC 49558 / DSM 4304 / JCM 9628 / NBRC 100126 / VC-16</strain>
    </source>
</reference>
<organism>
    <name type="scientific">Archaeoglobus fulgidus (strain ATCC 49558 / DSM 4304 / JCM 9628 / NBRC 100126 / VC-16)</name>
    <dbReference type="NCBI Taxonomy" id="224325"/>
    <lineage>
        <taxon>Archaea</taxon>
        <taxon>Methanobacteriati</taxon>
        <taxon>Methanobacteriota</taxon>
        <taxon>Archaeoglobi</taxon>
        <taxon>Archaeoglobales</taxon>
        <taxon>Archaeoglobaceae</taxon>
        <taxon>Archaeoglobus</taxon>
    </lineage>
</organism>
<gene>
    <name evidence="1" type="primary">speH</name>
    <name type="ordered locus">AF_1610</name>
</gene>
<protein>
    <recommendedName>
        <fullName evidence="1">S-adenosylmethionine decarboxylase proenzyme</fullName>
        <shortName evidence="1">AdoMetDC</shortName>
        <shortName evidence="1">SAMDC</shortName>
        <ecNumber evidence="1">4.1.1.50</ecNumber>
    </recommendedName>
    <component>
        <recommendedName>
            <fullName evidence="1">S-adenosylmethionine decarboxylase beta chain</fullName>
        </recommendedName>
    </component>
    <component>
        <recommendedName>
            <fullName evidence="1">S-adenosylmethionine decarboxylase alpha chain</fullName>
        </recommendedName>
    </component>
</protein>
<feature type="chain" id="PRO_0000030131" description="S-adenosylmethionine decarboxylase beta chain" evidence="1">
    <location>
        <begin position="1"/>
        <end position="61"/>
    </location>
</feature>
<feature type="chain" id="PRO_0000030132" description="S-adenosylmethionine decarboxylase alpha chain" evidence="1">
    <location>
        <begin position="62"/>
        <end position="112"/>
    </location>
</feature>
<feature type="active site" description="Schiff-base intermediate with substrate; via pyruvic acid" evidence="1">
    <location>
        <position position="62"/>
    </location>
</feature>
<feature type="active site" description="Proton acceptor; for processing activity" evidence="1">
    <location>
        <position position="67"/>
    </location>
</feature>
<feature type="active site" description="Proton donor; for catalytic activity" evidence="1">
    <location>
        <position position="82"/>
    </location>
</feature>
<feature type="site" description="Cleavage (non-hydrolytic); by autolysis" evidence="1">
    <location>
        <begin position="61"/>
        <end position="62"/>
    </location>
</feature>
<feature type="modified residue" description="Pyruvic acid (Ser); by autocatalysis" evidence="1">
    <location>
        <position position="62"/>
    </location>
</feature>
<dbReference type="EC" id="4.1.1.50" evidence="1"/>
<dbReference type="EMBL" id="AE000782">
    <property type="protein sequence ID" value="AAB89640.1"/>
    <property type="molecule type" value="Genomic_DNA"/>
</dbReference>
<dbReference type="PIR" id="A69451">
    <property type="entry name" value="A69451"/>
</dbReference>
<dbReference type="SMR" id="O28663"/>
<dbReference type="STRING" id="224325.AF_1610"/>
<dbReference type="PaxDb" id="224325-AF_1610"/>
<dbReference type="EnsemblBacteria" id="AAB89640">
    <property type="protein sequence ID" value="AAB89640"/>
    <property type="gene ID" value="AF_1610"/>
</dbReference>
<dbReference type="KEGG" id="afu:AF_1610"/>
<dbReference type="eggNOG" id="arCOG00279">
    <property type="taxonomic scope" value="Archaea"/>
</dbReference>
<dbReference type="HOGENOM" id="CLU_125470_2_3_2"/>
<dbReference type="OrthoDB" id="114016at2157"/>
<dbReference type="PhylomeDB" id="O28663"/>
<dbReference type="UniPathway" id="UPA00331">
    <property type="reaction ID" value="UER00451"/>
</dbReference>
<dbReference type="Proteomes" id="UP000002199">
    <property type="component" value="Chromosome"/>
</dbReference>
<dbReference type="GO" id="GO:0005829">
    <property type="term" value="C:cytosol"/>
    <property type="evidence" value="ECO:0007669"/>
    <property type="project" value="TreeGrafter"/>
</dbReference>
<dbReference type="GO" id="GO:0004014">
    <property type="term" value="F:adenosylmethionine decarboxylase activity"/>
    <property type="evidence" value="ECO:0007669"/>
    <property type="project" value="UniProtKB-UniRule"/>
</dbReference>
<dbReference type="GO" id="GO:0008295">
    <property type="term" value="P:spermidine biosynthetic process"/>
    <property type="evidence" value="ECO:0007669"/>
    <property type="project" value="UniProtKB-UniRule"/>
</dbReference>
<dbReference type="Gene3D" id="3.60.90.10">
    <property type="entry name" value="S-adenosylmethionine decarboxylase"/>
    <property type="match status" value="1"/>
</dbReference>
<dbReference type="HAMAP" id="MF_00464">
    <property type="entry name" value="AdoMetDC_1"/>
    <property type="match status" value="1"/>
</dbReference>
<dbReference type="InterPro" id="IPR003826">
    <property type="entry name" value="AdoMetDC_fam_prok"/>
</dbReference>
<dbReference type="InterPro" id="IPR016067">
    <property type="entry name" value="S-AdoMet_deCO2ase_core"/>
</dbReference>
<dbReference type="InterPro" id="IPR017716">
    <property type="entry name" value="S-AdoMet_deCOase_pro-enz"/>
</dbReference>
<dbReference type="NCBIfam" id="TIGR03330">
    <property type="entry name" value="SAM_DCase_Bsu"/>
    <property type="match status" value="1"/>
</dbReference>
<dbReference type="PANTHER" id="PTHR33866">
    <property type="entry name" value="S-ADENOSYLMETHIONINE DECARBOXYLASE PROENZYME"/>
    <property type="match status" value="1"/>
</dbReference>
<dbReference type="PANTHER" id="PTHR33866:SF2">
    <property type="entry name" value="S-ADENOSYLMETHIONINE DECARBOXYLASE PROENZYME"/>
    <property type="match status" value="1"/>
</dbReference>
<dbReference type="Pfam" id="PF02675">
    <property type="entry name" value="AdoMet_dc"/>
    <property type="match status" value="1"/>
</dbReference>
<dbReference type="SUPFAM" id="SSF56276">
    <property type="entry name" value="S-adenosylmethionine decarboxylase"/>
    <property type="match status" value="1"/>
</dbReference>